<accession>A8M9I3</accession>
<reference key="1">
    <citation type="submission" date="2007-10" db="EMBL/GenBank/DDBJ databases">
        <title>Complete sequence of Caldivirga maquilingensis IC-167.</title>
        <authorList>
            <consortium name="US DOE Joint Genome Institute"/>
            <person name="Copeland A."/>
            <person name="Lucas S."/>
            <person name="Lapidus A."/>
            <person name="Barry K."/>
            <person name="Glavina del Rio T."/>
            <person name="Dalin E."/>
            <person name="Tice H."/>
            <person name="Pitluck S."/>
            <person name="Saunders E."/>
            <person name="Brettin T."/>
            <person name="Bruce D."/>
            <person name="Detter J.C."/>
            <person name="Han C."/>
            <person name="Schmutz J."/>
            <person name="Larimer F."/>
            <person name="Land M."/>
            <person name="Hauser L."/>
            <person name="Kyrpides N."/>
            <person name="Ivanova N."/>
            <person name="Biddle J.F."/>
            <person name="Zhang Z."/>
            <person name="Fitz-Gibbon S.T."/>
            <person name="Lowe T.M."/>
            <person name="Saltikov C."/>
            <person name="House C.H."/>
            <person name="Richardson P."/>
        </authorList>
    </citation>
    <scope>NUCLEOTIDE SEQUENCE [LARGE SCALE GENOMIC DNA]</scope>
    <source>
        <strain>ATCC 700844 / DSM 13496 / JCM 10307 / IC-167</strain>
    </source>
</reference>
<dbReference type="EMBL" id="CP000852">
    <property type="protein sequence ID" value="ABW00864.1"/>
    <property type="molecule type" value="Genomic_DNA"/>
</dbReference>
<dbReference type="RefSeq" id="WP_012185084.1">
    <property type="nucleotide sequence ID" value="NC_009954.1"/>
</dbReference>
<dbReference type="SMR" id="A8M9I3"/>
<dbReference type="STRING" id="397948.Cmaq_0010"/>
<dbReference type="GeneID" id="5710304"/>
<dbReference type="KEGG" id="cma:Cmaq_0010"/>
<dbReference type="eggNOG" id="arCOG04088">
    <property type="taxonomic scope" value="Archaea"/>
</dbReference>
<dbReference type="HOGENOM" id="CLU_056222_2_0_2"/>
<dbReference type="OrthoDB" id="8644at2157"/>
<dbReference type="Proteomes" id="UP000001137">
    <property type="component" value="Chromosome"/>
</dbReference>
<dbReference type="GO" id="GO:0022625">
    <property type="term" value="C:cytosolic large ribosomal subunit"/>
    <property type="evidence" value="ECO:0007669"/>
    <property type="project" value="TreeGrafter"/>
</dbReference>
<dbReference type="GO" id="GO:0008097">
    <property type="term" value="F:5S rRNA binding"/>
    <property type="evidence" value="ECO:0007669"/>
    <property type="project" value="InterPro"/>
</dbReference>
<dbReference type="GO" id="GO:0003735">
    <property type="term" value="F:structural constituent of ribosome"/>
    <property type="evidence" value="ECO:0007669"/>
    <property type="project" value="InterPro"/>
</dbReference>
<dbReference type="GO" id="GO:0000027">
    <property type="term" value="P:ribosomal large subunit assembly"/>
    <property type="evidence" value="ECO:0007669"/>
    <property type="project" value="TreeGrafter"/>
</dbReference>
<dbReference type="GO" id="GO:0006412">
    <property type="term" value="P:translation"/>
    <property type="evidence" value="ECO:0007669"/>
    <property type="project" value="UniProtKB-UniRule"/>
</dbReference>
<dbReference type="CDD" id="cd00432">
    <property type="entry name" value="Ribosomal_L18_L5e"/>
    <property type="match status" value="1"/>
</dbReference>
<dbReference type="Gene3D" id="3.30.420.100">
    <property type="match status" value="1"/>
</dbReference>
<dbReference type="HAMAP" id="MF_01337_A">
    <property type="entry name" value="Ribosomal_uL18_A"/>
    <property type="match status" value="1"/>
</dbReference>
<dbReference type="InterPro" id="IPR005485">
    <property type="entry name" value="Rbsml_uL18_euk"/>
</dbReference>
<dbReference type="NCBIfam" id="NF006342">
    <property type="entry name" value="PRK08569.1"/>
    <property type="match status" value="1"/>
</dbReference>
<dbReference type="PANTHER" id="PTHR23410:SF12">
    <property type="entry name" value="LARGE RIBOSOMAL SUBUNIT PROTEIN UL18"/>
    <property type="match status" value="1"/>
</dbReference>
<dbReference type="PANTHER" id="PTHR23410">
    <property type="entry name" value="RIBOSOMAL PROTEIN L5-RELATED"/>
    <property type="match status" value="1"/>
</dbReference>
<dbReference type="Pfam" id="PF17144">
    <property type="entry name" value="Ribosomal_L5e"/>
    <property type="match status" value="2"/>
</dbReference>
<dbReference type="SUPFAM" id="SSF53137">
    <property type="entry name" value="Translational machinery components"/>
    <property type="match status" value="1"/>
</dbReference>
<proteinExistence type="inferred from homology"/>
<evidence type="ECO:0000255" key="1">
    <source>
        <dbReference type="HAMAP-Rule" id="MF_01337"/>
    </source>
</evidence>
<evidence type="ECO:0000305" key="2"/>
<feature type="chain" id="PRO_1000086654" description="Large ribosomal subunit protein uL18">
    <location>
        <begin position="1"/>
        <end position="207"/>
    </location>
</feature>
<comment type="function">
    <text evidence="1">This is one of the proteins that bind and probably mediate the attachment of the 5S RNA into the large ribosomal subunit, where it forms part of the central protuberance.</text>
</comment>
<comment type="subunit">
    <text evidence="1">Part of the 50S ribosomal subunit. Contacts the 5S and 23S rRNAs.</text>
</comment>
<comment type="similarity">
    <text evidence="1">Belongs to the universal ribosomal protein uL18 family.</text>
</comment>
<protein>
    <recommendedName>
        <fullName evidence="1">Large ribosomal subunit protein uL18</fullName>
    </recommendedName>
    <alternativeName>
        <fullName evidence="2">50S ribosomal protein L18</fullName>
    </alternativeName>
</protein>
<sequence length="207" mass="23127">MASSGRYKVKFRRRREGKTDYYKRRIMVISGKPRLVVRFSNRYVLAQVIVSAPQGDFTVAEASSRELVKKFGWLGGTGNTPAAYLVGLLIGYRALSKGIKLAVLDVGLHRVTKGGRLFAVVKGAVDAGLEVPHDEEVQPSEDRLNGEHIAQYAADLKQSNPELYKIRFSKYLARGLEPENISKHIEEVKSKIMEKYAKSEAKAEDSQ</sequence>
<keyword id="KW-1185">Reference proteome</keyword>
<keyword id="KW-0687">Ribonucleoprotein</keyword>
<keyword id="KW-0689">Ribosomal protein</keyword>
<keyword id="KW-0694">RNA-binding</keyword>
<keyword id="KW-0699">rRNA-binding</keyword>
<gene>
    <name evidence="1" type="primary">rpl18</name>
    <name type="ordered locus">Cmaq_0010</name>
</gene>
<organism>
    <name type="scientific">Caldivirga maquilingensis (strain ATCC 700844 / DSM 13496 / JCM 10307 / IC-167)</name>
    <dbReference type="NCBI Taxonomy" id="397948"/>
    <lineage>
        <taxon>Archaea</taxon>
        <taxon>Thermoproteota</taxon>
        <taxon>Thermoprotei</taxon>
        <taxon>Thermoproteales</taxon>
        <taxon>Thermoproteaceae</taxon>
        <taxon>Caldivirga</taxon>
    </lineage>
</organism>
<name>RL18_CALMQ</name>